<keyword id="KW-1003">Cell membrane</keyword>
<keyword id="KW-0210">Decarboxylase</keyword>
<keyword id="KW-0285">Flavoprotein</keyword>
<keyword id="KW-0288">FMN</keyword>
<keyword id="KW-0456">Lyase</keyword>
<keyword id="KW-0464">Manganese</keyword>
<keyword id="KW-0472">Membrane</keyword>
<keyword id="KW-0479">Metal-binding</keyword>
<keyword id="KW-0831">Ubiquinone biosynthesis</keyword>
<dbReference type="EC" id="4.1.1.98" evidence="1"/>
<dbReference type="EMBL" id="CP000931">
    <property type="protein sequence ID" value="ABZ75160.1"/>
    <property type="molecule type" value="Genomic_DNA"/>
</dbReference>
<dbReference type="RefSeq" id="WP_012275714.1">
    <property type="nucleotide sequence ID" value="NC_010334.1"/>
</dbReference>
<dbReference type="SMR" id="B0TS25"/>
<dbReference type="STRING" id="458817.Shal_0585"/>
<dbReference type="KEGG" id="shl:Shal_0585"/>
<dbReference type="eggNOG" id="COG0043">
    <property type="taxonomic scope" value="Bacteria"/>
</dbReference>
<dbReference type="HOGENOM" id="CLU_023348_4_1_6"/>
<dbReference type="OrthoDB" id="9809841at2"/>
<dbReference type="UniPathway" id="UPA00232"/>
<dbReference type="Proteomes" id="UP000001317">
    <property type="component" value="Chromosome"/>
</dbReference>
<dbReference type="GO" id="GO:0005829">
    <property type="term" value="C:cytosol"/>
    <property type="evidence" value="ECO:0007669"/>
    <property type="project" value="TreeGrafter"/>
</dbReference>
<dbReference type="GO" id="GO:0005886">
    <property type="term" value="C:plasma membrane"/>
    <property type="evidence" value="ECO:0007669"/>
    <property type="project" value="UniProtKB-SubCell"/>
</dbReference>
<dbReference type="GO" id="GO:0008694">
    <property type="term" value="F:3-octaprenyl-4-hydroxybenzoate carboxy-lyase activity"/>
    <property type="evidence" value="ECO:0007669"/>
    <property type="project" value="UniProtKB-UniRule"/>
</dbReference>
<dbReference type="GO" id="GO:0046872">
    <property type="term" value="F:metal ion binding"/>
    <property type="evidence" value="ECO:0007669"/>
    <property type="project" value="UniProtKB-KW"/>
</dbReference>
<dbReference type="GO" id="GO:0006744">
    <property type="term" value="P:ubiquinone biosynthetic process"/>
    <property type="evidence" value="ECO:0007669"/>
    <property type="project" value="UniProtKB-UniRule"/>
</dbReference>
<dbReference type="FunFam" id="1.20.5.570:FF:000001">
    <property type="entry name" value="3-octaprenyl-4-hydroxybenzoate carboxy-lyase"/>
    <property type="match status" value="1"/>
</dbReference>
<dbReference type="FunFam" id="3.40.1670.10:FF:000001">
    <property type="entry name" value="3-octaprenyl-4-hydroxybenzoate carboxy-lyase"/>
    <property type="match status" value="1"/>
</dbReference>
<dbReference type="Gene3D" id="1.20.5.570">
    <property type="entry name" value="Single helix bin"/>
    <property type="match status" value="1"/>
</dbReference>
<dbReference type="Gene3D" id="3.40.1670.10">
    <property type="entry name" value="UbiD C-terminal domain-like"/>
    <property type="match status" value="1"/>
</dbReference>
<dbReference type="HAMAP" id="MF_01636">
    <property type="entry name" value="UbiD"/>
    <property type="match status" value="1"/>
</dbReference>
<dbReference type="InterPro" id="IPR002830">
    <property type="entry name" value="UbiD"/>
</dbReference>
<dbReference type="InterPro" id="IPR049381">
    <property type="entry name" value="UbiD-like_C"/>
</dbReference>
<dbReference type="InterPro" id="IPR049383">
    <property type="entry name" value="UbiD-like_N"/>
</dbReference>
<dbReference type="InterPro" id="IPR023677">
    <property type="entry name" value="UbiD_bacteria"/>
</dbReference>
<dbReference type="InterPro" id="IPR048304">
    <property type="entry name" value="UbiD_Rift_dom"/>
</dbReference>
<dbReference type="NCBIfam" id="NF008175">
    <property type="entry name" value="PRK10922.1"/>
    <property type="match status" value="1"/>
</dbReference>
<dbReference type="NCBIfam" id="TIGR00148">
    <property type="entry name" value="UbiD family decarboxylase"/>
    <property type="match status" value="1"/>
</dbReference>
<dbReference type="PANTHER" id="PTHR30108">
    <property type="entry name" value="3-OCTAPRENYL-4-HYDROXYBENZOATE CARBOXY-LYASE-RELATED"/>
    <property type="match status" value="1"/>
</dbReference>
<dbReference type="PANTHER" id="PTHR30108:SF17">
    <property type="entry name" value="FERULIC ACID DECARBOXYLASE 1"/>
    <property type="match status" value="1"/>
</dbReference>
<dbReference type="Pfam" id="PF01977">
    <property type="entry name" value="UbiD"/>
    <property type="match status" value="1"/>
</dbReference>
<dbReference type="Pfam" id="PF20696">
    <property type="entry name" value="UbiD_C"/>
    <property type="match status" value="1"/>
</dbReference>
<dbReference type="Pfam" id="PF20695">
    <property type="entry name" value="UbiD_N"/>
    <property type="match status" value="1"/>
</dbReference>
<dbReference type="SUPFAM" id="SSF50475">
    <property type="entry name" value="FMN-binding split barrel"/>
    <property type="match status" value="1"/>
</dbReference>
<dbReference type="SUPFAM" id="SSF143968">
    <property type="entry name" value="UbiD C-terminal domain-like"/>
    <property type="match status" value="1"/>
</dbReference>
<gene>
    <name evidence="1" type="primary">ubiD</name>
    <name type="ordered locus">Shal_0585</name>
</gene>
<comment type="function">
    <text evidence="1">Catalyzes the decarboxylation of 3-octaprenyl-4-hydroxy benzoate to 2-octaprenylphenol, an intermediate step in ubiquinone biosynthesis.</text>
</comment>
<comment type="catalytic activity">
    <reaction evidence="1">
        <text>a 4-hydroxy-3-(all-trans-polyprenyl)benzoate + H(+) = a 2-(all-trans-polyprenyl)phenol + CO2</text>
        <dbReference type="Rhea" id="RHEA:41680"/>
        <dbReference type="Rhea" id="RHEA-COMP:9514"/>
        <dbReference type="Rhea" id="RHEA-COMP:9516"/>
        <dbReference type="ChEBI" id="CHEBI:1269"/>
        <dbReference type="ChEBI" id="CHEBI:15378"/>
        <dbReference type="ChEBI" id="CHEBI:16526"/>
        <dbReference type="ChEBI" id="CHEBI:78396"/>
        <dbReference type="EC" id="4.1.1.98"/>
    </reaction>
</comment>
<comment type="cofactor">
    <cofactor evidence="1">
        <name>prenylated FMN</name>
        <dbReference type="ChEBI" id="CHEBI:87746"/>
    </cofactor>
    <text evidence="1">Binds 1 prenylated FMN per subunit.</text>
</comment>
<comment type="cofactor">
    <cofactor evidence="1">
        <name>Mn(2+)</name>
        <dbReference type="ChEBI" id="CHEBI:29035"/>
    </cofactor>
</comment>
<comment type="pathway">
    <text evidence="1">Cofactor biosynthesis; ubiquinone biosynthesis.</text>
</comment>
<comment type="subunit">
    <text evidence="1">Homohexamer.</text>
</comment>
<comment type="subcellular location">
    <subcellularLocation>
        <location evidence="1">Cell membrane</location>
        <topology evidence="1">Peripheral membrane protein</topology>
    </subcellularLocation>
</comment>
<comment type="similarity">
    <text evidence="1">Belongs to the UbiD family.</text>
</comment>
<evidence type="ECO:0000255" key="1">
    <source>
        <dbReference type="HAMAP-Rule" id="MF_01636"/>
    </source>
</evidence>
<name>UBID_SHEHH</name>
<organism>
    <name type="scientific">Shewanella halifaxensis (strain HAW-EB4)</name>
    <dbReference type="NCBI Taxonomy" id="458817"/>
    <lineage>
        <taxon>Bacteria</taxon>
        <taxon>Pseudomonadati</taxon>
        <taxon>Pseudomonadota</taxon>
        <taxon>Gammaproteobacteria</taxon>
        <taxon>Alteromonadales</taxon>
        <taxon>Shewanellaceae</taxon>
        <taxon>Shewanella</taxon>
    </lineage>
</organism>
<sequence>MSFKDLRSFIDHLETNGELKRISHPVDPHLEMTEIADRVLRAKGPALLFENPVGNDMPVLANLFGTPKRVAMALGKEDPIALRDVGELLAFLKEPEPPSGFKDAIAKIPMFKQALNMPPKTVRNPPCQQVVKTGEEVDLTKLPIQHCWPGDVAPLVTWGLTITKGPRQKRQNLGIYRQQLLGKDKLIMRWLDHRGGALDFKDFKEKHPGERYPVVVALGADPVTILGAVTPVPDAMSEYAFAGLLRGERTEVCKALSCDLEVPATSEIILEGYIDPEEMAEEGPYGDHTGYYNETDSFPVFTVTHMTHRKDAIYHSTYTGRPPDEPAMLGVALNEVFVPILRKQYPEIIDFYLPPEGCSYRMAVISIRKQYPGHAKRVMMGAWSFLRQFMYTKFIVVVDEDVNCRDWNDVIWAITTRMDPKRDTVMIENTPIDYLDFASPVAGLGSKMGMDATNKWQGETDREWGTPIVMDEAVKQKVDAIWNDLGIDDAPTL</sequence>
<feature type="chain" id="PRO_1000088192" description="3-octaprenyl-4-hydroxybenzoate carboxy-lyase">
    <location>
        <begin position="1"/>
        <end position="493"/>
    </location>
</feature>
<feature type="active site" description="Proton donor" evidence="1">
    <location>
        <position position="287"/>
    </location>
</feature>
<feature type="binding site" evidence="1">
    <location>
        <position position="172"/>
    </location>
    <ligand>
        <name>Mn(2+)</name>
        <dbReference type="ChEBI" id="CHEBI:29035"/>
    </ligand>
</feature>
<feature type="binding site" evidence="1">
    <location>
        <begin position="175"/>
        <end position="177"/>
    </location>
    <ligand>
        <name>prenylated FMN</name>
        <dbReference type="ChEBI" id="CHEBI:87746"/>
    </ligand>
</feature>
<feature type="binding site" evidence="1">
    <location>
        <begin position="189"/>
        <end position="191"/>
    </location>
    <ligand>
        <name>prenylated FMN</name>
        <dbReference type="ChEBI" id="CHEBI:87746"/>
    </ligand>
</feature>
<feature type="binding site" evidence="1">
    <location>
        <begin position="194"/>
        <end position="195"/>
    </location>
    <ligand>
        <name>prenylated FMN</name>
        <dbReference type="ChEBI" id="CHEBI:87746"/>
    </ligand>
</feature>
<feature type="binding site" evidence="1">
    <location>
        <position position="238"/>
    </location>
    <ligand>
        <name>Mn(2+)</name>
        <dbReference type="ChEBI" id="CHEBI:29035"/>
    </ligand>
</feature>
<reference key="1">
    <citation type="submission" date="2008-01" db="EMBL/GenBank/DDBJ databases">
        <title>Complete sequence of Shewanella halifaxensis HAW-EB4.</title>
        <authorList>
            <consortium name="US DOE Joint Genome Institute"/>
            <person name="Copeland A."/>
            <person name="Lucas S."/>
            <person name="Lapidus A."/>
            <person name="Glavina del Rio T."/>
            <person name="Dalin E."/>
            <person name="Tice H."/>
            <person name="Bruce D."/>
            <person name="Goodwin L."/>
            <person name="Pitluck S."/>
            <person name="Sims D."/>
            <person name="Brettin T."/>
            <person name="Detter J.C."/>
            <person name="Han C."/>
            <person name="Kuske C.R."/>
            <person name="Schmutz J."/>
            <person name="Larimer F."/>
            <person name="Land M."/>
            <person name="Hauser L."/>
            <person name="Kyrpides N."/>
            <person name="Kim E."/>
            <person name="Zhao J.-S."/>
            <person name="Richardson P."/>
        </authorList>
    </citation>
    <scope>NUCLEOTIDE SEQUENCE [LARGE SCALE GENOMIC DNA]</scope>
    <source>
        <strain>HAW-EB4</strain>
    </source>
</reference>
<protein>
    <recommendedName>
        <fullName evidence="1">3-octaprenyl-4-hydroxybenzoate carboxy-lyase</fullName>
        <ecNumber evidence="1">4.1.1.98</ecNumber>
    </recommendedName>
    <alternativeName>
        <fullName evidence="1">Polyprenyl p-hydroxybenzoate decarboxylase</fullName>
    </alternativeName>
</protein>
<proteinExistence type="inferred from homology"/>
<accession>B0TS25</accession>